<name>GON3_SALTR</name>
<accession>P45653</accession>
<feature type="signal peptide">
    <location>
        <begin position="1"/>
        <end position="23"/>
    </location>
</feature>
<feature type="chain" id="PRO_0000012538" description="Progonadoliberin-3">
    <location>
        <begin position="24"/>
        <end position="82"/>
    </location>
</feature>
<feature type="peptide" id="PRO_0000012539" description="Gonadoliberin-3">
    <location>
        <begin position="24"/>
        <end position="33"/>
    </location>
</feature>
<feature type="peptide" id="PRO_0000012540" description="GnRH-associated peptide 3" evidence="2">
    <location>
        <begin position="37"/>
        <end position="82"/>
    </location>
</feature>
<feature type="modified residue" description="Pyrrolidone carboxylic acid" evidence="1">
    <location>
        <position position="24"/>
    </location>
</feature>
<feature type="modified residue" description="Glycine amide" evidence="1">
    <location>
        <position position="33"/>
    </location>
</feature>
<organism>
    <name type="scientific">Salmo trutta</name>
    <name type="common">Brown trout</name>
    <dbReference type="NCBI Taxonomy" id="8032"/>
    <lineage>
        <taxon>Eukaryota</taxon>
        <taxon>Metazoa</taxon>
        <taxon>Chordata</taxon>
        <taxon>Craniata</taxon>
        <taxon>Vertebrata</taxon>
        <taxon>Euteleostomi</taxon>
        <taxon>Actinopterygii</taxon>
        <taxon>Neopterygii</taxon>
        <taxon>Teleostei</taxon>
        <taxon>Protacanthopterygii</taxon>
        <taxon>Salmoniformes</taxon>
        <taxon>Salmonidae</taxon>
        <taxon>Salmoninae</taxon>
        <taxon>Salmo</taxon>
    </lineage>
</organism>
<gene>
    <name type="primary">gnrh3</name>
</gene>
<comment type="function">
    <text>Stimulates the secretion of gonadotropins.</text>
</comment>
<comment type="subcellular location">
    <subcellularLocation>
        <location>Secreted</location>
    </subcellularLocation>
</comment>
<comment type="similarity">
    <text evidence="3">Belongs to the GnRH family.</text>
</comment>
<keyword id="KW-0027">Amidation</keyword>
<keyword id="KW-0165">Cleavage on pair of basic residues</keyword>
<keyword id="KW-0372">Hormone</keyword>
<keyword id="KW-0873">Pyrrolidone carboxylic acid</keyword>
<keyword id="KW-1185">Reference proteome</keyword>
<keyword id="KW-0964">Secreted</keyword>
<keyword id="KW-0732">Signal</keyword>
<reference key="1">
    <citation type="journal article" date="1992" name="Mol. Cell. Endocrinol.">
        <title>The Atlantic salmon prepro-gonadotropin releasing hormone gene and mRNA.</title>
        <authorList>
            <person name="Klungland H."/>
            <person name="Lorens J.B."/>
            <person name="Andersen O."/>
            <person name="Kisen G.O."/>
            <person name="Alestroem P."/>
        </authorList>
    </citation>
    <scope>NUCLEOTIDE SEQUENCE [GENOMIC DNA]</scope>
</reference>
<reference key="2">
    <citation type="journal article" date="1992" name="Mol. Mar. Biol. Biotechnol.">
        <title>The salmon gonadotrophin-releasing hormone encoding gene in salmonids.</title>
        <authorList>
            <person name="Klungland H."/>
            <person name="Anderson O."/>
            <person name="Alestroem P."/>
        </authorList>
    </citation>
    <scope>NUCLEOTIDE SEQUENCE [GENOMIC DNA]</scope>
    <source>
        <tissue>Muscle</tissue>
    </source>
</reference>
<dbReference type="EMBL" id="X79713">
    <property type="protein sequence ID" value="CAA56152.1"/>
    <property type="molecule type" value="Genomic_DNA"/>
</dbReference>
<dbReference type="PIR" id="I51365">
    <property type="entry name" value="I51365"/>
</dbReference>
<dbReference type="FunCoup" id="P45653">
    <property type="interactions" value="210"/>
</dbReference>
<dbReference type="Ensembl" id="ENSSTUT00000041895.1">
    <property type="protein sequence ID" value="ENSSTUP00000040072.1"/>
    <property type="gene ID" value="ENSSTUG00000017052.1"/>
</dbReference>
<dbReference type="GeneTree" id="ENSGT00390000009274"/>
<dbReference type="InParanoid" id="P45653"/>
<dbReference type="OMA" id="EATFRMM"/>
<dbReference type="OrthoDB" id="8929129at2759"/>
<dbReference type="Proteomes" id="UP000472277">
    <property type="component" value="Chromosome 5"/>
</dbReference>
<dbReference type="GO" id="GO:0005615">
    <property type="term" value="C:extracellular space"/>
    <property type="evidence" value="ECO:0000250"/>
    <property type="project" value="UniProtKB"/>
</dbReference>
<dbReference type="GO" id="GO:0005183">
    <property type="term" value="F:gonadotropin hormone-releasing hormone activity"/>
    <property type="evidence" value="ECO:0007669"/>
    <property type="project" value="TreeGrafter"/>
</dbReference>
<dbReference type="GO" id="GO:0031530">
    <property type="term" value="F:gonadotropin-releasing hormone receptor binding"/>
    <property type="evidence" value="ECO:0007669"/>
    <property type="project" value="TreeGrafter"/>
</dbReference>
<dbReference type="InterPro" id="IPR002012">
    <property type="entry name" value="GnRH"/>
</dbReference>
<dbReference type="InterPro" id="IPR019792">
    <property type="entry name" value="Gonadoliberin"/>
</dbReference>
<dbReference type="PANTHER" id="PTHR10522">
    <property type="entry name" value="GONADOLIBERIN"/>
    <property type="match status" value="1"/>
</dbReference>
<dbReference type="PANTHER" id="PTHR10522:SF6">
    <property type="entry name" value="PROGONADOLIBERIN-2"/>
    <property type="match status" value="1"/>
</dbReference>
<dbReference type="Pfam" id="PF00446">
    <property type="entry name" value="GnRH"/>
    <property type="match status" value="1"/>
</dbReference>
<dbReference type="PROSITE" id="PS00473">
    <property type="entry name" value="GNRH"/>
    <property type="match status" value="1"/>
</dbReference>
<protein>
    <recommendedName>
        <fullName>Progonadoliberin-3</fullName>
    </recommendedName>
    <alternativeName>
        <fullName>Progonadoliberin III</fullName>
    </alternativeName>
    <component>
        <recommendedName>
            <fullName>Gonadoliberin-3</fullName>
        </recommendedName>
        <alternativeName>
            <fullName>Gonadoliberin III</fullName>
        </alternativeName>
        <alternativeName>
            <fullName>Gonadotropin-releasing hormone III</fullName>
            <shortName>GnRH III</shortName>
        </alternativeName>
        <alternativeName>
            <fullName>Luliberin III</fullName>
        </alternativeName>
        <alternativeName>
            <fullName>Luteinizing hormone-releasing hormone III</fullName>
            <shortName>LH-RH III</shortName>
        </alternativeName>
    </component>
    <component>
        <recommendedName>
            <fullName>GnRH-associated peptide 3</fullName>
        </recommendedName>
        <alternativeName>
            <fullName>GnRH-associated peptide III</fullName>
        </alternativeName>
    </component>
</protein>
<evidence type="ECO:0000250" key="1"/>
<evidence type="ECO:0000255" key="2"/>
<evidence type="ECO:0000305" key="3"/>
<sequence length="82" mass="9191">MDLSNRTVVQVVVLALVAQVTLSQHWSYGWLPGGKRSVGELEATIKMMDTGGVVALPEETSAHFSERLRPYDVILKKWMPHK</sequence>
<proteinExistence type="inferred from homology"/>